<reference key="1">
    <citation type="journal article" date="2011" name="Genet. Mol. Res.">
        <title>Identification of 18 genes encoding necrosis-inducing proteins from the plant pathogen Phytophthora capsici (Pythiaceae: Oomycetes).</title>
        <authorList>
            <person name="Feng B.Z."/>
            <person name="Li P.Q."/>
            <person name="Fu L."/>
            <person name="Sun B.B."/>
            <person name="Zhang X.G."/>
        </authorList>
    </citation>
    <scope>NUCLEOTIDE SEQUENCE [GENOMIC DNA]</scope>
    <scope>DOMAIN</scope>
</reference>
<reference key="2">
    <citation type="journal article" date="2014" name="BMC Plant Biol.">
        <title>Characterization of necrosis-inducing NLP proteins in Phytophthora capsici.</title>
        <authorList>
            <person name="Feng B.Z."/>
            <person name="Zhu X.P."/>
            <person name="Fu L."/>
            <person name="Lv R.F."/>
            <person name="Storey D."/>
            <person name="Tooley P."/>
            <person name="Zhang X.G."/>
        </authorList>
    </citation>
    <scope>INDUCTION</scope>
    <scope>FUNCTION</scope>
</reference>
<dbReference type="EMBL" id="HM543181">
    <property type="protein sequence ID" value="AEJ88246.1"/>
    <property type="molecule type" value="Genomic_DNA"/>
</dbReference>
<dbReference type="SMR" id="L7NCS2"/>
<dbReference type="VEuPathDB" id="FungiDB:DVH05_000857"/>
<dbReference type="GO" id="GO:0005576">
    <property type="term" value="C:extracellular region"/>
    <property type="evidence" value="ECO:0007669"/>
    <property type="project" value="UniProtKB-SubCell"/>
</dbReference>
<dbReference type="InterPro" id="IPR008701">
    <property type="entry name" value="NPP1"/>
</dbReference>
<dbReference type="PANTHER" id="PTHR33657">
    <property type="entry name" value="DOMAIN PROTEIN, PUTATIVE (AFU_ORTHOLOGUE AFUA_5G00600)-RELATED"/>
    <property type="match status" value="1"/>
</dbReference>
<dbReference type="PANTHER" id="PTHR33657:SF8">
    <property type="entry name" value="DOMAIN PROTEIN, PUTATIVE (AFU_ORTHOLOGUE AFUA_5G00600)-RELATED"/>
    <property type="match status" value="1"/>
</dbReference>
<dbReference type="Pfam" id="PF05630">
    <property type="entry name" value="NPP1"/>
    <property type="match status" value="1"/>
</dbReference>
<comment type="function">
    <text evidence="2">Secreted effector that contributes moderately to virulence during infection by P.capsici. Causes only small yellow areas at 3 days after inoculation of host C.annuum leaves; these areas expand somewhat and became necrotic at 7 days after inoculation. Leads only to chlorotic areas, without necrosis at 7 days after non-host N.benthamiana leaves infection.</text>
</comment>
<comment type="subcellular location">
    <subcellularLocation>
        <location evidence="6">Secreted</location>
    </subcellularLocation>
</comment>
<comment type="induction">
    <text evidence="2">Expression gradually increases to a maximum at 7 days after inoculation of pepper leaves.</text>
</comment>
<comment type="domain">
    <text evidence="1">Key residues/motif important for the effector activities are degenerated in most NLPs, including the nlp24 peptide consisting of the conserved region I (11-aa immunogenic part) and conserved region II (the heptapeptide GHRHDWE motif) that is important for phytotoxic activity.</text>
</comment>
<comment type="similarity">
    <text evidence="5">Belongs to the Necrosis inducing protein (NPP1) family.</text>
</comment>
<evidence type="ECO:0000250" key="1">
    <source>
        <dbReference type="UniProtKB" id="L7NCR0"/>
    </source>
</evidence>
<evidence type="ECO:0000269" key="2">
    <source>
    </source>
</evidence>
<evidence type="ECO:0000303" key="3">
    <source>
    </source>
</evidence>
<evidence type="ECO:0000303" key="4">
    <source>
    </source>
</evidence>
<evidence type="ECO:0000305" key="5"/>
<evidence type="ECO:0000305" key="6">
    <source>
    </source>
</evidence>
<evidence type="ECO:0000305" key="7">
    <source>
    </source>
</evidence>
<accession>L7NCS2</accession>
<sequence>MYSWYFPKDSPSTGMGHRHDWEHAIVFIDNPDVPEPKILACSVSSHAGYKKYNPCPPWVIDGTSLKVRYKHGWPLNHDLDTTGDAGTFQDLIMWDQMTEDARRALNSVHFGSANTPFNDGNFKPKLEKAWPF</sequence>
<gene>
    <name evidence="4" type="primary">NLP15</name>
    <name evidence="3" type="synonym">NPP15</name>
</gene>
<organism>
    <name type="scientific">Phytophthora capsici</name>
    <dbReference type="NCBI Taxonomy" id="4784"/>
    <lineage>
        <taxon>Eukaryota</taxon>
        <taxon>Sar</taxon>
        <taxon>Stramenopiles</taxon>
        <taxon>Oomycota</taxon>
        <taxon>Peronosporales</taxon>
        <taxon>Peronosporaceae</taxon>
        <taxon>Phytophthora</taxon>
    </lineage>
</organism>
<keyword id="KW-0964">Secreted</keyword>
<keyword id="KW-0843">Virulence</keyword>
<feature type="chain" id="PRO_0000447428" description="NLP effector protein 15">
    <location>
        <begin position="1"/>
        <end position="132"/>
    </location>
</feature>
<feature type="short sequence motif" description="Conserved undecapeptide motif I" evidence="1">
    <location>
        <begin position="1"/>
        <end position="9"/>
    </location>
</feature>
<feature type="short sequence motif" description="Hepta-peptide GHRHDWE motif II" evidence="7">
    <location>
        <begin position="16"/>
        <end position="22"/>
    </location>
</feature>
<protein>
    <recommendedName>
        <fullName evidence="4">NLP effector protein 15</fullName>
    </recommendedName>
    <alternativeName>
        <fullName evidence="3">Necrosis-inducing protein 15</fullName>
    </alternativeName>
    <alternativeName>
        <fullName evidence="3">Nep1-like protein 15</fullName>
    </alternativeName>
</protein>
<proteinExistence type="evidence at transcript level"/>
<name>NLP15_PHYCP</name>